<protein>
    <recommendedName>
        <fullName evidence="1">N-methyl-L-tryptophan oxidase</fullName>
        <shortName evidence="1">MTOX</shortName>
        <ecNumber evidence="1">1.5.3.-</ecNumber>
    </recommendedName>
</protein>
<comment type="function">
    <text evidence="1">Catalyzes the oxidative demethylation of N-methyl-L-tryptophan.</text>
</comment>
<comment type="catalytic activity">
    <reaction evidence="1">
        <text>N(alpha)-methyl-L-tryptophan + O2 + H2O = L-tryptophan + formaldehyde + H2O2</text>
        <dbReference type="Rhea" id="RHEA:28006"/>
        <dbReference type="ChEBI" id="CHEBI:15377"/>
        <dbReference type="ChEBI" id="CHEBI:15379"/>
        <dbReference type="ChEBI" id="CHEBI:16240"/>
        <dbReference type="ChEBI" id="CHEBI:16842"/>
        <dbReference type="ChEBI" id="CHEBI:57283"/>
        <dbReference type="ChEBI" id="CHEBI:57912"/>
    </reaction>
</comment>
<comment type="cofactor">
    <cofactor evidence="1">
        <name>FAD</name>
        <dbReference type="ChEBI" id="CHEBI:57692"/>
    </cofactor>
    <text evidence="1">Binds 1 FAD per subunit.</text>
</comment>
<comment type="subunit">
    <text evidence="1">Monomer.</text>
</comment>
<comment type="similarity">
    <text evidence="1">Belongs to the MSOX/MTOX family. MTOX subfamily.</text>
</comment>
<evidence type="ECO:0000255" key="1">
    <source>
        <dbReference type="HAMAP-Rule" id="MF_00515"/>
    </source>
</evidence>
<gene>
    <name evidence="1" type="primary">solA</name>
    <name type="ordered locus">YPA_1945</name>
</gene>
<feature type="chain" id="PRO_0000259026" description="N-methyl-L-tryptophan oxidase">
    <location>
        <begin position="1"/>
        <end position="371"/>
    </location>
</feature>
<feature type="binding site" evidence="1">
    <location>
        <begin position="4"/>
        <end position="34"/>
    </location>
    <ligand>
        <name>FAD</name>
        <dbReference type="ChEBI" id="CHEBI:57692"/>
    </ligand>
</feature>
<feature type="modified residue" description="S-8alpha-FAD cysteine" evidence="1">
    <location>
        <position position="307"/>
    </location>
</feature>
<accession>Q1C6L1</accession>
<dbReference type="EC" id="1.5.3.-" evidence="1"/>
<dbReference type="EMBL" id="CP000308">
    <property type="protein sequence ID" value="ABG13911.1"/>
    <property type="molecule type" value="Genomic_DNA"/>
</dbReference>
<dbReference type="RefSeq" id="WP_002211850.1">
    <property type="nucleotide sequence ID" value="NZ_CP009906.1"/>
</dbReference>
<dbReference type="SMR" id="Q1C6L1"/>
<dbReference type="GeneID" id="57976231"/>
<dbReference type="KEGG" id="ypa:YPA_1945"/>
<dbReference type="Proteomes" id="UP000001971">
    <property type="component" value="Chromosome"/>
</dbReference>
<dbReference type="GO" id="GO:0005829">
    <property type="term" value="C:cytosol"/>
    <property type="evidence" value="ECO:0007669"/>
    <property type="project" value="TreeGrafter"/>
</dbReference>
<dbReference type="GO" id="GO:0050660">
    <property type="term" value="F:flavin adenine dinucleotide binding"/>
    <property type="evidence" value="ECO:0007669"/>
    <property type="project" value="InterPro"/>
</dbReference>
<dbReference type="GO" id="GO:0050131">
    <property type="term" value="F:N-methyl-L-amino-acid oxidase activity"/>
    <property type="evidence" value="ECO:0007669"/>
    <property type="project" value="InterPro"/>
</dbReference>
<dbReference type="GO" id="GO:0008115">
    <property type="term" value="F:sarcosine oxidase activity"/>
    <property type="evidence" value="ECO:0007669"/>
    <property type="project" value="TreeGrafter"/>
</dbReference>
<dbReference type="Gene3D" id="3.30.9.10">
    <property type="entry name" value="D-Amino Acid Oxidase, subunit A, domain 2"/>
    <property type="match status" value="1"/>
</dbReference>
<dbReference type="Gene3D" id="3.50.50.60">
    <property type="entry name" value="FAD/NAD(P)-binding domain"/>
    <property type="match status" value="1"/>
</dbReference>
<dbReference type="HAMAP" id="MF_00515">
    <property type="entry name" value="MTOX"/>
    <property type="match status" value="1"/>
</dbReference>
<dbReference type="InterPro" id="IPR006076">
    <property type="entry name" value="FAD-dep_OxRdtase"/>
</dbReference>
<dbReference type="InterPro" id="IPR036188">
    <property type="entry name" value="FAD/NAD-bd_sf"/>
</dbReference>
<dbReference type="InterPro" id="IPR023493">
    <property type="entry name" value="Me_Trp_Oxase_MTOX"/>
</dbReference>
<dbReference type="InterPro" id="IPR045170">
    <property type="entry name" value="MTOX"/>
</dbReference>
<dbReference type="NCBIfam" id="NF008425">
    <property type="entry name" value="PRK11259.1"/>
    <property type="match status" value="1"/>
</dbReference>
<dbReference type="PANTHER" id="PTHR10961:SF7">
    <property type="entry name" value="FAD DEPENDENT OXIDOREDUCTASE DOMAIN-CONTAINING PROTEIN"/>
    <property type="match status" value="1"/>
</dbReference>
<dbReference type="PANTHER" id="PTHR10961">
    <property type="entry name" value="PEROXISOMAL SARCOSINE OXIDASE"/>
    <property type="match status" value="1"/>
</dbReference>
<dbReference type="Pfam" id="PF01266">
    <property type="entry name" value="DAO"/>
    <property type="match status" value="1"/>
</dbReference>
<dbReference type="SUPFAM" id="SSF54373">
    <property type="entry name" value="FAD-linked reductases, C-terminal domain"/>
    <property type="match status" value="1"/>
</dbReference>
<dbReference type="SUPFAM" id="SSF51905">
    <property type="entry name" value="FAD/NAD(P)-binding domain"/>
    <property type="match status" value="1"/>
</dbReference>
<sequence>MDYDLIVIGSGSVGSAAGYYASQAGLNVLMIDSAMPPHQAGSHHGETRIMRHAYGEGEKYVPLVLRAQALWDQLAAQTGEKLFQACGVINLGPDNSTFLQNVQRSAQQYDLPVETLNSTQIREKWPVFTVPDNYIAVFEPQSGYLRSELAVKTLIKAVTEAGCGILFNCPVTAIESHQAGVDVVTIDGTYSATKVVVTAGTWVKELLPTLPVTPVRKVFSWHQADGRYSEANHFPAFTVEMPDNILYYGFPAQNDALKLGKHHGGQLIESAAQRKPFGRYAEDGTEVFSFLRHFLPGVGVCLRGEACSYDMSPDEDFIIDTLPEDERVMVVSGLSGHGFKFATALGEVAALFAQDKPSPIDISAFSLARFR</sequence>
<proteinExistence type="inferred from homology"/>
<organism>
    <name type="scientific">Yersinia pestis bv. Antiqua (strain Antiqua)</name>
    <dbReference type="NCBI Taxonomy" id="360102"/>
    <lineage>
        <taxon>Bacteria</taxon>
        <taxon>Pseudomonadati</taxon>
        <taxon>Pseudomonadota</taxon>
        <taxon>Gammaproteobacteria</taxon>
        <taxon>Enterobacterales</taxon>
        <taxon>Yersiniaceae</taxon>
        <taxon>Yersinia</taxon>
    </lineage>
</organism>
<name>MTOX_YERPA</name>
<keyword id="KW-0274">FAD</keyword>
<keyword id="KW-0285">Flavoprotein</keyword>
<keyword id="KW-0560">Oxidoreductase</keyword>
<reference key="1">
    <citation type="journal article" date="2006" name="J. Bacteriol.">
        <title>Complete genome sequence of Yersinia pestis strains Antiqua and Nepal516: evidence of gene reduction in an emerging pathogen.</title>
        <authorList>
            <person name="Chain P.S.G."/>
            <person name="Hu P."/>
            <person name="Malfatti S.A."/>
            <person name="Radnedge L."/>
            <person name="Larimer F."/>
            <person name="Vergez L.M."/>
            <person name="Worsham P."/>
            <person name="Chu M.C."/>
            <person name="Andersen G.L."/>
        </authorList>
    </citation>
    <scope>NUCLEOTIDE SEQUENCE [LARGE SCALE GENOMIC DNA]</scope>
    <source>
        <strain>Antiqua</strain>
    </source>
</reference>